<gene>
    <name type="primary">RPLP2</name>
    <name type="synonym">RPP2</name>
</gene>
<sequence>MRYVASYLLAALGGNTSPSAKDIKKILDSVGIEADDDRLDKVISELNGKNIEDVIAQGIGKLASVPAGGAVAVSAAPGSAAPAAGSAPAAAEERKEEKKEESEESDDDMGFGLFD</sequence>
<organism>
    <name type="scientific">Equus caballus</name>
    <name type="common">Horse</name>
    <dbReference type="NCBI Taxonomy" id="9796"/>
    <lineage>
        <taxon>Eukaryota</taxon>
        <taxon>Metazoa</taxon>
        <taxon>Chordata</taxon>
        <taxon>Craniata</taxon>
        <taxon>Vertebrata</taxon>
        <taxon>Euteleostomi</taxon>
        <taxon>Mammalia</taxon>
        <taxon>Eutheria</taxon>
        <taxon>Laurasiatheria</taxon>
        <taxon>Perissodactyla</taxon>
        <taxon>Equidae</taxon>
        <taxon>Equus</taxon>
    </lineage>
</organism>
<keyword id="KW-0007">Acetylation</keyword>
<keyword id="KW-0597">Phosphoprotein</keyword>
<keyword id="KW-1185">Reference proteome</keyword>
<keyword id="KW-0687">Ribonucleoprotein</keyword>
<keyword id="KW-0689">Ribosomal protein</keyword>
<reference key="1">
    <citation type="submission" date="2003-02" db="EMBL/GenBank/DDBJ databases">
        <title>Expression analysis of equine interleukin-1b treated equine synovium using suppression subtractive hybridization analysis (SSH-PCR).</title>
        <authorList>
            <person name="Takafuji V.A."/>
            <person name="Crisman M.V."/>
            <person name="Seat K.L."/>
            <person name="Sharova L.V."/>
            <person name="Ward D.L."/>
            <person name="Howard R.D."/>
        </authorList>
    </citation>
    <scope>NUCLEOTIDE SEQUENCE [MRNA]</scope>
</reference>
<comment type="function">
    <text>Plays an important role in the elongation step of protein synthesis.</text>
</comment>
<comment type="subunit">
    <text evidence="1">Heterodimer with RPLP1 at the lateral ribosomal stalk of the large ribosomal subunit.</text>
</comment>
<comment type="similarity">
    <text evidence="5">Belongs to the eukaryotic ribosomal protein P1/P2 family.</text>
</comment>
<name>RLA2_HORSE</name>
<evidence type="ECO:0000250" key="1"/>
<evidence type="ECO:0000250" key="2">
    <source>
        <dbReference type="UniProtKB" id="P05387"/>
    </source>
</evidence>
<evidence type="ECO:0000250" key="3">
    <source>
        <dbReference type="UniProtKB" id="P99027"/>
    </source>
</evidence>
<evidence type="ECO:0000256" key="4">
    <source>
        <dbReference type="SAM" id="MobiDB-lite"/>
    </source>
</evidence>
<evidence type="ECO:0000305" key="5"/>
<dbReference type="EMBL" id="AY246717">
    <property type="protein sequence ID" value="AAP78699.1"/>
    <property type="molecule type" value="mRNA"/>
</dbReference>
<dbReference type="RefSeq" id="NP_001078905.1">
    <property type="nucleotide sequence ID" value="NM_001085436.1"/>
</dbReference>
<dbReference type="BMRB" id="Q6X9Z5"/>
<dbReference type="SMR" id="Q6X9Z5"/>
<dbReference type="FunCoup" id="Q6X9Z5">
    <property type="interactions" value="1336"/>
</dbReference>
<dbReference type="STRING" id="9796.ENSECAP00000000003"/>
<dbReference type="PaxDb" id="9796-ENSECAP00000000003"/>
<dbReference type="PeptideAtlas" id="Q6X9Z5"/>
<dbReference type="GeneID" id="100034001"/>
<dbReference type="KEGG" id="ecb:100034001"/>
<dbReference type="CTD" id="6181"/>
<dbReference type="InParanoid" id="Q6X9Z5"/>
<dbReference type="OrthoDB" id="1227494at2759"/>
<dbReference type="Proteomes" id="UP000002281">
    <property type="component" value="Unplaced"/>
</dbReference>
<dbReference type="GO" id="GO:0022625">
    <property type="term" value="C:cytosolic large ribosomal subunit"/>
    <property type="evidence" value="ECO:0007669"/>
    <property type="project" value="InterPro"/>
</dbReference>
<dbReference type="GO" id="GO:0003735">
    <property type="term" value="F:structural constituent of ribosome"/>
    <property type="evidence" value="ECO:0007669"/>
    <property type="project" value="InterPro"/>
</dbReference>
<dbReference type="GO" id="GO:0002182">
    <property type="term" value="P:cytoplasmic translational elongation"/>
    <property type="evidence" value="ECO:0007669"/>
    <property type="project" value="InterPro"/>
</dbReference>
<dbReference type="CDD" id="cd05833">
    <property type="entry name" value="Ribosomal_P2"/>
    <property type="match status" value="1"/>
</dbReference>
<dbReference type="FunFam" id="1.10.10.1410:FF:000002">
    <property type="entry name" value="60S acidic ribosomal protein P2"/>
    <property type="match status" value="1"/>
</dbReference>
<dbReference type="Gene3D" id="1.10.10.1410">
    <property type="match status" value="1"/>
</dbReference>
<dbReference type="HAMAP" id="MF_01478">
    <property type="entry name" value="Ribosomal_L12_arch"/>
    <property type="match status" value="1"/>
</dbReference>
<dbReference type="InterPro" id="IPR038716">
    <property type="entry name" value="P1/P2_N_sf"/>
</dbReference>
<dbReference type="InterPro" id="IPR027534">
    <property type="entry name" value="Ribosomal_P1/P2"/>
</dbReference>
<dbReference type="InterPro" id="IPR044076">
    <property type="entry name" value="Ribosomal_P2"/>
</dbReference>
<dbReference type="PANTHER" id="PTHR21141">
    <property type="entry name" value="60S ACIDIC RIBOSOMAL PROTEIN FAMILY MEMBER"/>
    <property type="match status" value="1"/>
</dbReference>
<dbReference type="PANTHER" id="PTHR21141:SF5">
    <property type="entry name" value="LARGE RIBOSOMAL SUBUNIT PROTEIN P2"/>
    <property type="match status" value="1"/>
</dbReference>
<dbReference type="Pfam" id="PF00428">
    <property type="entry name" value="Ribosomal_60s"/>
    <property type="match status" value="1"/>
</dbReference>
<protein>
    <recommendedName>
        <fullName evidence="5">Large ribosomal subunit protein P2</fullName>
    </recommendedName>
    <alternativeName>
        <fullName>60S acidic ribosomal protein P2</fullName>
    </alternativeName>
</protein>
<accession>Q6X9Z5</accession>
<proteinExistence type="inferred from homology"/>
<feature type="chain" id="PRO_0000157639" description="Large ribosomal subunit protein P2">
    <location>
        <begin position="1"/>
        <end position="115"/>
    </location>
</feature>
<feature type="region of interest" description="Disordered" evidence="4">
    <location>
        <begin position="76"/>
        <end position="115"/>
    </location>
</feature>
<feature type="compositionally biased region" description="Low complexity" evidence="4">
    <location>
        <begin position="76"/>
        <end position="90"/>
    </location>
</feature>
<feature type="compositionally biased region" description="Basic and acidic residues" evidence="4">
    <location>
        <begin position="91"/>
        <end position="101"/>
    </location>
</feature>
<feature type="modified residue" description="N-acetylmethionine" evidence="2">
    <location>
        <position position="1"/>
    </location>
</feature>
<feature type="modified residue" description="Phosphoserine" evidence="2">
    <location>
        <position position="17"/>
    </location>
</feature>
<feature type="modified residue" description="Phosphoserine" evidence="2">
    <location>
        <position position="19"/>
    </location>
</feature>
<feature type="modified residue" description="N6-acetyllysine; alternate" evidence="2">
    <location>
        <position position="21"/>
    </location>
</feature>
<feature type="modified residue" description="N6-succinyllysine; alternate" evidence="3">
    <location>
        <position position="21"/>
    </location>
</feature>
<feature type="modified residue" description="Phosphoserine" evidence="2">
    <location>
        <position position="79"/>
    </location>
</feature>
<feature type="modified residue" description="Phosphoserine" evidence="2">
    <location>
        <position position="86"/>
    </location>
</feature>
<feature type="modified residue" description="Phosphoserine" evidence="2">
    <location>
        <position position="102"/>
    </location>
</feature>
<feature type="modified residue" description="Phosphoserine" evidence="3">
    <location>
        <position position="105"/>
    </location>
</feature>